<name>PLP_RICBR</name>
<gene>
    <name type="primary">plp</name>
    <name type="ordered locus">RBE_0898</name>
</gene>
<reference key="1">
    <citation type="journal article" date="2006" name="PLoS Genet.">
        <title>Genome sequence of Rickettsia bellii illuminates the role of amoebae in gene exchanges between intracellular pathogens.</title>
        <authorList>
            <person name="Ogata H."/>
            <person name="La Scola B."/>
            <person name="Audic S."/>
            <person name="Renesto P."/>
            <person name="Blanc G."/>
            <person name="Robert C."/>
            <person name="Fournier P.-E."/>
            <person name="Claverie J.-M."/>
            <person name="Raoult D."/>
        </authorList>
    </citation>
    <scope>NUCLEOTIDE SEQUENCE [LARGE SCALE GENOMIC DNA]</scope>
    <source>
        <strain>RML369-C</strain>
    </source>
</reference>
<sequence>MKKLSIVLLSVSMLSSIAFADNSDRVVATYTGGEVRESQIMKEFKPQLNLPSGETIKNFDDFPPQDQDKLIRIYVNNILLKKEVEKSNITSSKEFQEKLENAKNQLAQKELLENYVKSNLTDKMFDDEYNKYVTSLKGKEQIKVAHILVKSEKEANDLKNKLNKGADFAKLAGESSLDKASATNGGVIGYILLNQPGQLVPEFENKAFALKVNEVSTPVKTDYGWHIIKVLEKKPVPIPTKEEAKMTIDNVLAAEILKKYISDLEAKADLKIMLPPAANNEAKK</sequence>
<evidence type="ECO:0000250" key="1"/>
<evidence type="ECO:0000255" key="2"/>
<evidence type="ECO:0000255" key="3">
    <source>
        <dbReference type="PROSITE-ProRule" id="PRU00278"/>
    </source>
</evidence>
<evidence type="ECO:0000305" key="4"/>
<dbReference type="EC" id="5.2.1.8"/>
<dbReference type="EMBL" id="CP000087">
    <property type="protein sequence ID" value="ABE04979.1"/>
    <property type="molecule type" value="Genomic_DNA"/>
</dbReference>
<dbReference type="RefSeq" id="WP_011477564.1">
    <property type="nucleotide sequence ID" value="NC_007940.1"/>
</dbReference>
<dbReference type="SMR" id="Q1RI35"/>
<dbReference type="KEGG" id="rbe:RBE_0898"/>
<dbReference type="eggNOG" id="COG0760">
    <property type="taxonomic scope" value="Bacteria"/>
</dbReference>
<dbReference type="HOGENOM" id="CLU_034646_1_3_5"/>
<dbReference type="OrthoDB" id="14196at2"/>
<dbReference type="Proteomes" id="UP000001951">
    <property type="component" value="Chromosome"/>
</dbReference>
<dbReference type="GO" id="GO:0009279">
    <property type="term" value="C:cell outer membrane"/>
    <property type="evidence" value="ECO:0007669"/>
    <property type="project" value="UniProtKB-SubCell"/>
</dbReference>
<dbReference type="GO" id="GO:0003755">
    <property type="term" value="F:peptidyl-prolyl cis-trans isomerase activity"/>
    <property type="evidence" value="ECO:0007669"/>
    <property type="project" value="UniProtKB-KW"/>
</dbReference>
<dbReference type="Gene3D" id="3.10.50.40">
    <property type="match status" value="1"/>
</dbReference>
<dbReference type="InterPro" id="IPR046357">
    <property type="entry name" value="PPIase_dom_sf"/>
</dbReference>
<dbReference type="InterPro" id="IPR000297">
    <property type="entry name" value="PPIase_PpiC"/>
</dbReference>
<dbReference type="InterPro" id="IPR023058">
    <property type="entry name" value="PPIase_PpiC_CS"/>
</dbReference>
<dbReference type="InterPro" id="IPR050245">
    <property type="entry name" value="PrsA_foldase"/>
</dbReference>
<dbReference type="InterPro" id="IPR027304">
    <property type="entry name" value="Trigger_fact/SurA_dom_sf"/>
</dbReference>
<dbReference type="PANTHER" id="PTHR47245:SF2">
    <property type="entry name" value="PEPTIDYL-PROLYL CIS-TRANS ISOMERASE HP_0175-RELATED"/>
    <property type="match status" value="1"/>
</dbReference>
<dbReference type="PANTHER" id="PTHR47245">
    <property type="entry name" value="PEPTIDYLPROLYL ISOMERASE"/>
    <property type="match status" value="1"/>
</dbReference>
<dbReference type="Pfam" id="PF13616">
    <property type="entry name" value="Rotamase_3"/>
    <property type="match status" value="1"/>
</dbReference>
<dbReference type="SUPFAM" id="SSF54534">
    <property type="entry name" value="FKBP-like"/>
    <property type="match status" value="1"/>
</dbReference>
<dbReference type="SUPFAM" id="SSF109998">
    <property type="entry name" value="Triger factor/SurA peptide-binding domain-like"/>
    <property type="match status" value="1"/>
</dbReference>
<dbReference type="PROSITE" id="PS01096">
    <property type="entry name" value="PPIC_PPIASE_1"/>
    <property type="match status" value="1"/>
</dbReference>
<dbReference type="PROSITE" id="PS50198">
    <property type="entry name" value="PPIC_PPIASE_2"/>
    <property type="match status" value="1"/>
</dbReference>
<keyword id="KW-0998">Cell outer membrane</keyword>
<keyword id="KW-0413">Isomerase</keyword>
<keyword id="KW-0472">Membrane</keyword>
<keyword id="KW-0697">Rotamase</keyword>
<keyword id="KW-0732">Signal</keyword>
<protein>
    <recommendedName>
        <fullName>Parvulin-like PPIase</fullName>
        <ecNumber>5.2.1.8</ecNumber>
    </recommendedName>
    <alternativeName>
        <fullName>Peptidyl-prolyl cis-trans isomerase plp</fullName>
    </alternativeName>
    <alternativeName>
        <fullName>Rotamase plp</fullName>
    </alternativeName>
</protein>
<proteinExistence type="inferred from homology"/>
<feature type="signal peptide" evidence="2">
    <location>
        <begin position="1"/>
        <end position="20"/>
    </location>
</feature>
<feature type="chain" id="PRO_0000289284" description="Parvulin-like PPIase">
    <location>
        <begin position="21"/>
        <end position="284"/>
    </location>
</feature>
<feature type="domain" description="PpiC" evidence="3">
    <location>
        <begin position="139"/>
        <end position="232"/>
    </location>
</feature>
<organism>
    <name type="scientific">Rickettsia bellii (strain RML369-C)</name>
    <dbReference type="NCBI Taxonomy" id="336407"/>
    <lineage>
        <taxon>Bacteria</taxon>
        <taxon>Pseudomonadati</taxon>
        <taxon>Pseudomonadota</taxon>
        <taxon>Alphaproteobacteria</taxon>
        <taxon>Rickettsiales</taxon>
        <taxon>Rickettsiaceae</taxon>
        <taxon>Rickettsieae</taxon>
        <taxon>Rickettsia</taxon>
        <taxon>belli group</taxon>
    </lineage>
</organism>
<comment type="catalytic activity">
    <reaction>
        <text>[protein]-peptidylproline (omega=180) = [protein]-peptidylproline (omega=0)</text>
        <dbReference type="Rhea" id="RHEA:16237"/>
        <dbReference type="Rhea" id="RHEA-COMP:10747"/>
        <dbReference type="Rhea" id="RHEA-COMP:10748"/>
        <dbReference type="ChEBI" id="CHEBI:83833"/>
        <dbReference type="ChEBI" id="CHEBI:83834"/>
        <dbReference type="EC" id="5.2.1.8"/>
    </reaction>
</comment>
<comment type="subcellular location">
    <subcellularLocation>
        <location evidence="1">Cell outer membrane</location>
    </subcellularLocation>
</comment>
<comment type="similarity">
    <text evidence="4">Belongs to the PpiC/parvulin rotamase family.</text>
</comment>
<accession>Q1RI35</accession>